<evidence type="ECO:0000269" key="1">
    <source ref="1"/>
</evidence>
<evidence type="ECO:0000305" key="2"/>
<protein>
    <recommendedName>
        <fullName>Feather keratin B-4</fullName>
        <shortName>F-ker</shortName>
    </recommendedName>
</protein>
<keyword id="KW-0007">Acetylation</keyword>
<keyword id="KW-0903">Direct protein sequencing</keyword>
<keyword id="KW-0416">Keratin</keyword>
<reference key="1">
    <citation type="journal article" date="1986" name="Biochim. Biophys. Acta">
        <title>The primary structure of feather keratins from duck (Anas platyrhynchos) and pigeon (Columba livia).</title>
        <authorList>
            <person name="Arai K.M."/>
            <person name="Takahashi R."/>
            <person name="Yokote Y."/>
            <person name="Akahane K."/>
        </authorList>
    </citation>
    <scope>PROTEIN SEQUENCE</scope>
    <scope>ACETYLATION AT SER-1</scope>
    <source>
        <tissue>Feather</tissue>
    </source>
</reference>
<comment type="subunit">
    <text>The avian keratins (F-ker, S-ker, C-ker and B-ker) are a complex mixture of very similar polypeptides.</text>
</comment>
<comment type="similarity">
    <text evidence="2">Belongs to the avian keratin family.</text>
</comment>
<sequence>SCYDLCRPCGPTPLANSCNEPCVRQCQDSRVVIQPSPVVVTLPGPILSSFPQNTAVGSTSAAVGSILSEEGVPISSGGFGLSGFGGRYSGRCLPC</sequence>
<dbReference type="PIR" id="A24506">
    <property type="entry name" value="KRDKF4"/>
</dbReference>
<dbReference type="Proteomes" id="UP000694400">
    <property type="component" value="Unplaced"/>
</dbReference>
<dbReference type="GO" id="GO:0005882">
    <property type="term" value="C:intermediate filament"/>
    <property type="evidence" value="ECO:0007669"/>
    <property type="project" value="UniProtKB-KW"/>
</dbReference>
<dbReference type="GO" id="GO:0005200">
    <property type="term" value="F:structural constituent of cytoskeleton"/>
    <property type="evidence" value="ECO:0007669"/>
    <property type="project" value="InterPro"/>
</dbReference>
<dbReference type="InterPro" id="IPR003461">
    <property type="entry name" value="Keratin"/>
</dbReference>
<dbReference type="PANTHER" id="PTHR31203">
    <property type="entry name" value="BETA-KERATIN-RELATED PROTEIN-RELATED"/>
    <property type="match status" value="1"/>
</dbReference>
<dbReference type="PANTHER" id="PTHR31203:SF1">
    <property type="entry name" value="BETA-KERATIN-RELATED PROTEIN-RELATED"/>
    <property type="match status" value="1"/>
</dbReference>
<dbReference type="Pfam" id="PF02422">
    <property type="entry name" value="Keratin"/>
    <property type="match status" value="1"/>
</dbReference>
<proteinExistence type="evidence at protein level"/>
<feature type="chain" id="PRO_0000096995" description="Feather keratin B-4">
    <location>
        <begin position="1"/>
        <end position="95"/>
    </location>
</feature>
<feature type="modified residue" description="N-acetylserine" evidence="1">
    <location>
        <position position="1"/>
    </location>
</feature>
<accession>P08335</accession>
<name>KRFT_ANAPL</name>
<organism>
    <name type="scientific">Anas platyrhynchos</name>
    <name type="common">Mallard</name>
    <name type="synonym">Anas boschas</name>
    <dbReference type="NCBI Taxonomy" id="8839"/>
    <lineage>
        <taxon>Eukaryota</taxon>
        <taxon>Metazoa</taxon>
        <taxon>Chordata</taxon>
        <taxon>Craniata</taxon>
        <taxon>Vertebrata</taxon>
        <taxon>Euteleostomi</taxon>
        <taxon>Archelosauria</taxon>
        <taxon>Archosauria</taxon>
        <taxon>Dinosauria</taxon>
        <taxon>Saurischia</taxon>
        <taxon>Theropoda</taxon>
        <taxon>Coelurosauria</taxon>
        <taxon>Aves</taxon>
        <taxon>Neognathae</taxon>
        <taxon>Galloanserae</taxon>
        <taxon>Anseriformes</taxon>
        <taxon>Anatidae</taxon>
        <taxon>Anatinae</taxon>
        <taxon>Anas</taxon>
    </lineage>
</organism>